<reference key="1">
    <citation type="journal article" date="2002" name="Am. J. Bot.">
        <title>Phylogenetic relationships in the cactus family (Cactaceae) based on evidence from trnK/matK and trnL-trnF sequences.</title>
        <authorList>
            <person name="Nyffeler R."/>
        </authorList>
        <dbReference type="AGRICOLA" id="IND23311510"/>
    </citation>
    <scope>NUCLEOTIDE SEQUENCE [GENOMIC DNA]</scope>
</reference>
<dbReference type="EMBL" id="AY015278">
    <property type="protein sequence ID" value="AAK19765.1"/>
    <property type="molecule type" value="Genomic_DNA"/>
</dbReference>
<dbReference type="GO" id="GO:0009507">
    <property type="term" value="C:chloroplast"/>
    <property type="evidence" value="ECO:0007669"/>
    <property type="project" value="UniProtKB-SubCell"/>
</dbReference>
<dbReference type="GO" id="GO:0003723">
    <property type="term" value="F:RNA binding"/>
    <property type="evidence" value="ECO:0007669"/>
    <property type="project" value="UniProtKB-KW"/>
</dbReference>
<dbReference type="GO" id="GO:0006397">
    <property type="term" value="P:mRNA processing"/>
    <property type="evidence" value="ECO:0007669"/>
    <property type="project" value="UniProtKB-KW"/>
</dbReference>
<dbReference type="GO" id="GO:0008380">
    <property type="term" value="P:RNA splicing"/>
    <property type="evidence" value="ECO:0007669"/>
    <property type="project" value="UniProtKB-UniRule"/>
</dbReference>
<dbReference type="GO" id="GO:0008033">
    <property type="term" value="P:tRNA processing"/>
    <property type="evidence" value="ECO:0007669"/>
    <property type="project" value="UniProtKB-KW"/>
</dbReference>
<dbReference type="HAMAP" id="MF_01390">
    <property type="entry name" value="MatK"/>
    <property type="match status" value="1"/>
</dbReference>
<dbReference type="InterPro" id="IPR024937">
    <property type="entry name" value="Domain_X"/>
</dbReference>
<dbReference type="InterPro" id="IPR002866">
    <property type="entry name" value="Maturase_MatK"/>
</dbReference>
<dbReference type="InterPro" id="IPR024942">
    <property type="entry name" value="Maturase_MatK_N"/>
</dbReference>
<dbReference type="PANTHER" id="PTHR34811">
    <property type="entry name" value="MATURASE K"/>
    <property type="match status" value="1"/>
</dbReference>
<dbReference type="PANTHER" id="PTHR34811:SF1">
    <property type="entry name" value="MATURASE K"/>
    <property type="match status" value="1"/>
</dbReference>
<dbReference type="Pfam" id="PF01348">
    <property type="entry name" value="Intron_maturas2"/>
    <property type="match status" value="1"/>
</dbReference>
<dbReference type="Pfam" id="PF01824">
    <property type="entry name" value="MatK_N"/>
    <property type="match status" value="1"/>
</dbReference>
<evidence type="ECO:0000255" key="1">
    <source>
        <dbReference type="HAMAP-Rule" id="MF_01390"/>
    </source>
</evidence>
<organism>
    <name type="scientific">Austrocylindropuntia vestita</name>
    <name type="common">Cactus</name>
    <name type="synonym">Opuntia vestita</name>
    <dbReference type="NCBI Taxonomy" id="154406"/>
    <lineage>
        <taxon>Eukaryota</taxon>
        <taxon>Viridiplantae</taxon>
        <taxon>Streptophyta</taxon>
        <taxon>Embryophyta</taxon>
        <taxon>Tracheophyta</taxon>
        <taxon>Spermatophyta</taxon>
        <taxon>Magnoliopsida</taxon>
        <taxon>eudicotyledons</taxon>
        <taxon>Gunneridae</taxon>
        <taxon>Pentapetalae</taxon>
        <taxon>Caryophyllales</taxon>
        <taxon>Cactineae</taxon>
        <taxon>Cactaceae</taxon>
        <taxon>Opuntioideae</taxon>
        <taxon>Austrocylindropuntia</taxon>
    </lineage>
</organism>
<comment type="function">
    <text evidence="1">Usually encoded in the trnK tRNA gene intron. Probably assists in splicing its own and other chloroplast group II introns.</text>
</comment>
<comment type="subcellular location">
    <subcellularLocation>
        <location>Plastid</location>
        <location>Chloroplast</location>
    </subcellularLocation>
</comment>
<comment type="similarity">
    <text evidence="1">Belongs to the intron maturase 2 family. MatK subfamily.</text>
</comment>
<proteinExistence type="inferred from homology"/>
<name>MATK_AUSVS</name>
<keyword id="KW-0150">Chloroplast</keyword>
<keyword id="KW-0507">mRNA processing</keyword>
<keyword id="KW-0934">Plastid</keyword>
<keyword id="KW-0694">RNA-binding</keyword>
<keyword id="KW-0819">tRNA processing</keyword>
<accession>Q95EE0</accession>
<geneLocation type="chloroplast"/>
<protein>
    <recommendedName>
        <fullName evidence="1">Maturase K</fullName>
    </recommendedName>
    <alternativeName>
        <fullName evidence="1">Intron maturase</fullName>
    </alternativeName>
</protein>
<feature type="chain" id="PRO_0000143268" description="Maturase K">
    <location>
        <begin position="1"/>
        <end position="509"/>
    </location>
</feature>
<gene>
    <name evidence="1" type="primary">matK</name>
</gene>
<sequence length="509" mass="60810">MEEFQRYIELDRSWQHNFFYPLIFQEYIYGFAYDHGLNKSILLENAGHKKYSLLIVKRLITRMYQQNHLLLSANHSNQNDFFGHKHKNYLYYQIISEGFAVITEIPFSLLLISSLEAKEKKIAKSHNLRSIHSIFPFFEDKFLHLNYVLKILIPYPIHLEILVQTLRYWVKDASSLHLLRFFLYEYRNWNSLITPQKSISIFSKKNQRLFLFLYNFHVCEYESIFVFLCNQSSHLRSTSFGALLERIYFYGKLEYLVKVKTFTKDFRLILWPFKDPFLHYVRYRGKSILASKGTSLLMYKWKYYLINFWQCHFSLWSQPRRIYINRLSKHSLDFMSFFSSVRLNSSVVRSQMVENSFLIDNPIKKFDTIVRIIPLVGSLAKAKFCNVLGHPVSKSVWTDLLDSDIIDRFGRICRNLSHYYSGSSRKKSLYRIKYILRLSCARTLARKHKSTVRAFLKRLGSEFLEEFFTEEEKVLSLILPRNSSISRGLYRGPLWYLDIICIHDLANDE</sequence>